<dbReference type="EMBL" id="CP001113">
    <property type="protein sequence ID" value="ACF65619.1"/>
    <property type="molecule type" value="Genomic_DNA"/>
</dbReference>
<dbReference type="RefSeq" id="WP_000133064.1">
    <property type="nucleotide sequence ID" value="NZ_CCMR01000001.1"/>
</dbReference>
<dbReference type="SMR" id="B4T6Z8"/>
<dbReference type="KEGG" id="see:SNSL254_A3544"/>
<dbReference type="HOGENOM" id="CLU_006301_6_3_6"/>
<dbReference type="Proteomes" id="UP000008824">
    <property type="component" value="Chromosome"/>
</dbReference>
<dbReference type="GO" id="GO:0005829">
    <property type="term" value="C:cytosol"/>
    <property type="evidence" value="ECO:0007669"/>
    <property type="project" value="TreeGrafter"/>
</dbReference>
<dbReference type="GO" id="GO:0005525">
    <property type="term" value="F:GTP binding"/>
    <property type="evidence" value="ECO:0007669"/>
    <property type="project" value="UniProtKB-KW"/>
</dbReference>
<dbReference type="GO" id="GO:0003924">
    <property type="term" value="F:GTPase activity"/>
    <property type="evidence" value="ECO:0007669"/>
    <property type="project" value="UniProtKB-UniRule"/>
</dbReference>
<dbReference type="GO" id="GO:0097216">
    <property type="term" value="F:guanosine tetraphosphate binding"/>
    <property type="evidence" value="ECO:0007669"/>
    <property type="project" value="UniProtKB-ARBA"/>
</dbReference>
<dbReference type="GO" id="GO:0003743">
    <property type="term" value="F:translation initiation factor activity"/>
    <property type="evidence" value="ECO:0007669"/>
    <property type="project" value="UniProtKB-UniRule"/>
</dbReference>
<dbReference type="CDD" id="cd01887">
    <property type="entry name" value="IF2_eIF5B"/>
    <property type="match status" value="1"/>
</dbReference>
<dbReference type="CDD" id="cd03702">
    <property type="entry name" value="IF2_mtIF2_II"/>
    <property type="match status" value="1"/>
</dbReference>
<dbReference type="CDD" id="cd03692">
    <property type="entry name" value="mtIF2_IVc"/>
    <property type="match status" value="1"/>
</dbReference>
<dbReference type="FunFam" id="2.40.30.10:FF:000007">
    <property type="entry name" value="Translation initiation factor IF-2"/>
    <property type="match status" value="1"/>
</dbReference>
<dbReference type="FunFam" id="2.40.30.10:FF:000008">
    <property type="entry name" value="Translation initiation factor IF-2"/>
    <property type="match status" value="1"/>
</dbReference>
<dbReference type="FunFam" id="3.30.56.50:FF:000001">
    <property type="entry name" value="Translation initiation factor IF-2"/>
    <property type="match status" value="1"/>
</dbReference>
<dbReference type="FunFam" id="3.40.50.10050:FF:000001">
    <property type="entry name" value="Translation initiation factor IF-2"/>
    <property type="match status" value="1"/>
</dbReference>
<dbReference type="FunFam" id="3.40.50.300:FF:000019">
    <property type="entry name" value="Translation initiation factor IF-2"/>
    <property type="match status" value="1"/>
</dbReference>
<dbReference type="Gene3D" id="3.40.50.300">
    <property type="entry name" value="P-loop containing nucleotide triphosphate hydrolases"/>
    <property type="match status" value="1"/>
</dbReference>
<dbReference type="Gene3D" id="3.30.56.50">
    <property type="entry name" value="Putative DNA-binding domain, N-terminal subdomain of bacterial translation initiation factor IF2"/>
    <property type="match status" value="1"/>
</dbReference>
<dbReference type="Gene3D" id="2.40.30.10">
    <property type="entry name" value="Translation factors"/>
    <property type="match status" value="2"/>
</dbReference>
<dbReference type="Gene3D" id="3.40.50.10050">
    <property type="entry name" value="Translation initiation factor IF- 2, domain 3"/>
    <property type="match status" value="1"/>
</dbReference>
<dbReference type="HAMAP" id="MF_00100_B">
    <property type="entry name" value="IF_2_B"/>
    <property type="match status" value="1"/>
</dbReference>
<dbReference type="InterPro" id="IPR009061">
    <property type="entry name" value="DNA-bd_dom_put_sf"/>
</dbReference>
<dbReference type="InterPro" id="IPR053905">
    <property type="entry name" value="EF-G-like_DII"/>
</dbReference>
<dbReference type="InterPro" id="IPR004161">
    <property type="entry name" value="EFTu-like_2"/>
</dbReference>
<dbReference type="InterPro" id="IPR013575">
    <property type="entry name" value="IF2_assoc_dom_bac"/>
</dbReference>
<dbReference type="InterPro" id="IPR044145">
    <property type="entry name" value="IF2_II"/>
</dbReference>
<dbReference type="InterPro" id="IPR006847">
    <property type="entry name" value="IF2_N"/>
</dbReference>
<dbReference type="InterPro" id="IPR027417">
    <property type="entry name" value="P-loop_NTPase"/>
</dbReference>
<dbReference type="InterPro" id="IPR005225">
    <property type="entry name" value="Small_GTP-bd"/>
</dbReference>
<dbReference type="InterPro" id="IPR000795">
    <property type="entry name" value="T_Tr_GTP-bd_dom"/>
</dbReference>
<dbReference type="InterPro" id="IPR000178">
    <property type="entry name" value="TF_IF2_bacterial-like"/>
</dbReference>
<dbReference type="InterPro" id="IPR015760">
    <property type="entry name" value="TIF_IF2"/>
</dbReference>
<dbReference type="InterPro" id="IPR023115">
    <property type="entry name" value="TIF_IF2_dom3"/>
</dbReference>
<dbReference type="InterPro" id="IPR036925">
    <property type="entry name" value="TIF_IF2_dom3_sf"/>
</dbReference>
<dbReference type="InterPro" id="IPR009000">
    <property type="entry name" value="Transl_B-barrel_sf"/>
</dbReference>
<dbReference type="NCBIfam" id="TIGR00487">
    <property type="entry name" value="IF-2"/>
    <property type="match status" value="1"/>
</dbReference>
<dbReference type="NCBIfam" id="TIGR00231">
    <property type="entry name" value="small_GTP"/>
    <property type="match status" value="1"/>
</dbReference>
<dbReference type="PANTHER" id="PTHR43381:SF5">
    <property type="entry name" value="TR-TYPE G DOMAIN-CONTAINING PROTEIN"/>
    <property type="match status" value="1"/>
</dbReference>
<dbReference type="PANTHER" id="PTHR43381">
    <property type="entry name" value="TRANSLATION INITIATION FACTOR IF-2-RELATED"/>
    <property type="match status" value="1"/>
</dbReference>
<dbReference type="Pfam" id="PF22042">
    <property type="entry name" value="EF-G_D2"/>
    <property type="match status" value="1"/>
</dbReference>
<dbReference type="Pfam" id="PF00009">
    <property type="entry name" value="GTP_EFTU"/>
    <property type="match status" value="1"/>
</dbReference>
<dbReference type="Pfam" id="PF03144">
    <property type="entry name" value="GTP_EFTU_D2"/>
    <property type="match status" value="1"/>
</dbReference>
<dbReference type="Pfam" id="PF11987">
    <property type="entry name" value="IF-2"/>
    <property type="match status" value="1"/>
</dbReference>
<dbReference type="Pfam" id="PF08364">
    <property type="entry name" value="IF2_assoc"/>
    <property type="match status" value="1"/>
</dbReference>
<dbReference type="Pfam" id="PF04760">
    <property type="entry name" value="IF2_N"/>
    <property type="match status" value="2"/>
</dbReference>
<dbReference type="SUPFAM" id="SSF52156">
    <property type="entry name" value="Initiation factor IF2/eIF5b, domain 3"/>
    <property type="match status" value="1"/>
</dbReference>
<dbReference type="SUPFAM" id="SSF52540">
    <property type="entry name" value="P-loop containing nucleoside triphosphate hydrolases"/>
    <property type="match status" value="1"/>
</dbReference>
<dbReference type="SUPFAM" id="SSF46955">
    <property type="entry name" value="Putative DNA-binding domain"/>
    <property type="match status" value="1"/>
</dbReference>
<dbReference type="SUPFAM" id="SSF50447">
    <property type="entry name" value="Translation proteins"/>
    <property type="match status" value="2"/>
</dbReference>
<dbReference type="PROSITE" id="PS51722">
    <property type="entry name" value="G_TR_2"/>
    <property type="match status" value="1"/>
</dbReference>
<dbReference type="PROSITE" id="PS01176">
    <property type="entry name" value="IF2"/>
    <property type="match status" value="1"/>
</dbReference>
<proteinExistence type="inferred from homology"/>
<protein>
    <recommendedName>
        <fullName evidence="2">Translation initiation factor IF-2</fullName>
    </recommendedName>
</protein>
<organism>
    <name type="scientific">Salmonella newport (strain SL254)</name>
    <dbReference type="NCBI Taxonomy" id="423368"/>
    <lineage>
        <taxon>Bacteria</taxon>
        <taxon>Pseudomonadati</taxon>
        <taxon>Pseudomonadota</taxon>
        <taxon>Gammaproteobacteria</taxon>
        <taxon>Enterobacterales</taxon>
        <taxon>Enterobacteriaceae</taxon>
        <taxon>Salmonella</taxon>
    </lineage>
</organism>
<accession>B4T6Z8</accession>
<sequence>MTDVTLKALAAERQVSVDRLVQQFADAGIRKSADDSVSAQEKQTLLAHLNREAVSGPDKLTLQRKTRSTLNIPGTGGKSKSVQIEVRKKRTFVKRDPQEAERLAAEEQAQREAEEQARREAEEQAKREAQQKAEREAAEQAKREAAEKAKREAAEKDKVSNQQTDDMTKTAQAEKARRENEAAELKRKAEEEARRKLEEEARRVAEEARRMAEENKWTATPEPVEDTSDYHVTTSQHARQAEDENDREVEGGRGRGRNAKAARPAKKGKHAESKADREEARAAVRGGKGGKRKGSSLQQGFQKPAQAVNRDVVIGETITVGELANKMAVKGSQVIKAMMKLGAMATINQVIDQETAQLVAEEMGHKVILRRENELEEAVMSDRDTGAAAEPRAPVVTIMGHVDHGKTSLLDYIRSTKVASGEAGGITQHIGAYHVETDNGMITFLDTPGHAAFTSMRARGAQATDIVVLVVAADDGVMPQTIEAIQHAKAAGVPVVVAVNKIDKPEADPDRVKNELSQYGILPEEWGGESQFVHVSAKAGTGIDELLDAILLQAEVLELKAVRKGMASGAVIESFLDKGRGPVATVLVREGTLHKGDIVLCGFEYGRVRAMRNELGQEVLEAGPSIPVEILGLSGVPAAGDEVTVVRDEKKAREVALYRQGKFREVKLARQQKSKLENMFANMTEGEVHEVNIVLKADVQGSVEAISDSLLKLSTDEVKVKIIGSGVGGITETDATLAAASNAILVGFNVRADASARKVIESESLDLRYYSVIYNLIDEVKAAMSGMLSPELKQQIIGLAEVRDVFKSPKFGAIAGCMVTEGTIKRHNPIRVLRDNVVIYEGELESLRRFKDDVNEVRNGMECGIGVKNYNDVRVGDMIEVFEIIEIQRTIA</sequence>
<gene>
    <name evidence="2" type="primary">infB</name>
    <name type="ordered locus">SNSL254_A3544</name>
</gene>
<name>IF2_SALNS</name>
<comment type="function">
    <text evidence="2">One of the essential components for the initiation of protein synthesis. Protects formylmethionyl-tRNA from spontaneous hydrolysis and promotes its binding to the 30S ribosomal subunits. Also involved in the hydrolysis of GTP during the formation of the 70S ribosomal complex.</text>
</comment>
<comment type="subcellular location">
    <subcellularLocation>
        <location evidence="2">Cytoplasm</location>
    </subcellularLocation>
</comment>
<comment type="similarity">
    <text evidence="2">Belongs to the TRAFAC class translation factor GTPase superfamily. Classic translation factor GTPase family. IF-2 subfamily.</text>
</comment>
<feature type="chain" id="PRO_1000093822" description="Translation initiation factor IF-2">
    <location>
        <begin position="1"/>
        <end position="892"/>
    </location>
</feature>
<feature type="domain" description="tr-type G">
    <location>
        <begin position="391"/>
        <end position="560"/>
    </location>
</feature>
<feature type="region of interest" description="Disordered" evidence="3">
    <location>
        <begin position="88"/>
        <end position="305"/>
    </location>
</feature>
<feature type="region of interest" description="G1" evidence="1">
    <location>
        <begin position="400"/>
        <end position="407"/>
    </location>
</feature>
<feature type="region of interest" description="G2" evidence="1">
    <location>
        <begin position="425"/>
        <end position="429"/>
    </location>
</feature>
<feature type="region of interest" description="G3" evidence="1">
    <location>
        <begin position="446"/>
        <end position="449"/>
    </location>
</feature>
<feature type="region of interest" description="G4" evidence="1">
    <location>
        <begin position="500"/>
        <end position="503"/>
    </location>
</feature>
<feature type="region of interest" description="G5" evidence="1">
    <location>
        <begin position="536"/>
        <end position="538"/>
    </location>
</feature>
<feature type="compositionally biased region" description="Basic and acidic residues" evidence="3">
    <location>
        <begin position="93"/>
        <end position="159"/>
    </location>
</feature>
<feature type="compositionally biased region" description="Basic and acidic residues" evidence="3">
    <location>
        <begin position="166"/>
        <end position="216"/>
    </location>
</feature>
<feature type="compositionally biased region" description="Basic residues" evidence="3">
    <location>
        <begin position="254"/>
        <end position="269"/>
    </location>
</feature>
<feature type="compositionally biased region" description="Basic and acidic residues" evidence="3">
    <location>
        <begin position="270"/>
        <end position="282"/>
    </location>
</feature>
<feature type="binding site" evidence="2">
    <location>
        <begin position="400"/>
        <end position="407"/>
    </location>
    <ligand>
        <name>GTP</name>
        <dbReference type="ChEBI" id="CHEBI:37565"/>
    </ligand>
</feature>
<feature type="binding site" evidence="2">
    <location>
        <begin position="446"/>
        <end position="450"/>
    </location>
    <ligand>
        <name>GTP</name>
        <dbReference type="ChEBI" id="CHEBI:37565"/>
    </ligand>
</feature>
<feature type="binding site" evidence="2">
    <location>
        <begin position="500"/>
        <end position="503"/>
    </location>
    <ligand>
        <name>GTP</name>
        <dbReference type="ChEBI" id="CHEBI:37565"/>
    </ligand>
</feature>
<evidence type="ECO:0000250" key="1"/>
<evidence type="ECO:0000255" key="2">
    <source>
        <dbReference type="HAMAP-Rule" id="MF_00100"/>
    </source>
</evidence>
<evidence type="ECO:0000256" key="3">
    <source>
        <dbReference type="SAM" id="MobiDB-lite"/>
    </source>
</evidence>
<keyword id="KW-0963">Cytoplasm</keyword>
<keyword id="KW-0342">GTP-binding</keyword>
<keyword id="KW-0396">Initiation factor</keyword>
<keyword id="KW-0547">Nucleotide-binding</keyword>
<keyword id="KW-0648">Protein biosynthesis</keyword>
<reference key="1">
    <citation type="journal article" date="2011" name="J. Bacteriol.">
        <title>Comparative genomics of 28 Salmonella enterica isolates: evidence for CRISPR-mediated adaptive sublineage evolution.</title>
        <authorList>
            <person name="Fricke W.F."/>
            <person name="Mammel M.K."/>
            <person name="McDermott P.F."/>
            <person name="Tartera C."/>
            <person name="White D.G."/>
            <person name="Leclerc J.E."/>
            <person name="Ravel J."/>
            <person name="Cebula T.A."/>
        </authorList>
    </citation>
    <scope>NUCLEOTIDE SEQUENCE [LARGE SCALE GENOMIC DNA]</scope>
    <source>
        <strain>SL254</strain>
    </source>
</reference>